<proteinExistence type="inferred from homology"/>
<reference key="1">
    <citation type="submission" date="2006-03" db="EMBL/GenBank/DDBJ databases">
        <title>Complete sequence of Methylobacillus flagellatus KT.</title>
        <authorList>
            <consortium name="US DOE Joint Genome Institute"/>
            <person name="Copeland A."/>
            <person name="Lucas S."/>
            <person name="Lapidus A."/>
            <person name="Barry K."/>
            <person name="Detter J.C."/>
            <person name="Glavina del Rio T."/>
            <person name="Hammon N."/>
            <person name="Israni S."/>
            <person name="Dalin E."/>
            <person name="Tice H."/>
            <person name="Pitluck S."/>
            <person name="Brettin T."/>
            <person name="Bruce D."/>
            <person name="Han C."/>
            <person name="Tapia R."/>
            <person name="Saunders E."/>
            <person name="Gilna P."/>
            <person name="Schmutz J."/>
            <person name="Larimer F."/>
            <person name="Land M."/>
            <person name="Kyrpides N."/>
            <person name="Anderson I."/>
            <person name="Richardson P."/>
        </authorList>
    </citation>
    <scope>NUCLEOTIDE SEQUENCE [LARGE SCALE GENOMIC DNA]</scope>
    <source>
        <strain>ATCC 51484 / DSM 6875 / VKM B-1610 / KT</strain>
    </source>
</reference>
<feature type="chain" id="PRO_0000282232" description="UPF0060 membrane protein Mfla_0485">
    <location>
        <begin position="1"/>
        <end position="108"/>
    </location>
</feature>
<feature type="transmembrane region" description="Helical" evidence="1">
    <location>
        <begin position="7"/>
        <end position="27"/>
    </location>
</feature>
<feature type="transmembrane region" description="Helical" evidence="1">
    <location>
        <begin position="33"/>
        <end position="53"/>
    </location>
</feature>
<feature type="transmembrane region" description="Helical" evidence="1">
    <location>
        <begin position="63"/>
        <end position="83"/>
    </location>
</feature>
<feature type="transmembrane region" description="Helical" evidence="1">
    <location>
        <begin position="87"/>
        <end position="107"/>
    </location>
</feature>
<sequence>MLVLKTFSLFILTALAEILGCYLPYLWLKKDGSVWLLLPAAISLAVFAWLLSLHPTAAGRVYAAYGGVYIFVALGWLWLVDGIRPSTWDFVGVGVALAGMAIIMFAPR</sequence>
<gene>
    <name type="ordered locus">Mfla_0485</name>
</gene>
<protein>
    <recommendedName>
        <fullName evidence="1">UPF0060 membrane protein Mfla_0485</fullName>
    </recommendedName>
</protein>
<keyword id="KW-0997">Cell inner membrane</keyword>
<keyword id="KW-1003">Cell membrane</keyword>
<keyword id="KW-0472">Membrane</keyword>
<keyword id="KW-1185">Reference proteome</keyword>
<keyword id="KW-0812">Transmembrane</keyword>
<keyword id="KW-1133">Transmembrane helix</keyword>
<dbReference type="EMBL" id="CP000284">
    <property type="protein sequence ID" value="ABE48755.1"/>
    <property type="molecule type" value="Genomic_DNA"/>
</dbReference>
<dbReference type="RefSeq" id="WP_011478852.1">
    <property type="nucleotide sequence ID" value="NC_007947.1"/>
</dbReference>
<dbReference type="SMR" id="Q1H432"/>
<dbReference type="KEGG" id="mfa:Mfla_0485"/>
<dbReference type="eggNOG" id="COG1742">
    <property type="taxonomic scope" value="Bacteria"/>
</dbReference>
<dbReference type="HOGENOM" id="CLU_117653_2_0_4"/>
<dbReference type="OrthoDB" id="123240at2"/>
<dbReference type="Proteomes" id="UP000002440">
    <property type="component" value="Chromosome"/>
</dbReference>
<dbReference type="GO" id="GO:0005886">
    <property type="term" value="C:plasma membrane"/>
    <property type="evidence" value="ECO:0007669"/>
    <property type="project" value="UniProtKB-SubCell"/>
</dbReference>
<dbReference type="HAMAP" id="MF_00010">
    <property type="entry name" value="UPF0060"/>
    <property type="match status" value="1"/>
</dbReference>
<dbReference type="InterPro" id="IPR003844">
    <property type="entry name" value="UPF0060"/>
</dbReference>
<dbReference type="NCBIfam" id="NF002586">
    <property type="entry name" value="PRK02237.1"/>
    <property type="match status" value="1"/>
</dbReference>
<dbReference type="PANTHER" id="PTHR36116">
    <property type="entry name" value="UPF0060 MEMBRANE PROTEIN YNFA"/>
    <property type="match status" value="1"/>
</dbReference>
<dbReference type="PANTHER" id="PTHR36116:SF1">
    <property type="entry name" value="UPF0060 MEMBRANE PROTEIN YNFA"/>
    <property type="match status" value="1"/>
</dbReference>
<dbReference type="Pfam" id="PF02694">
    <property type="entry name" value="UPF0060"/>
    <property type="match status" value="1"/>
</dbReference>
<dbReference type="SUPFAM" id="SSF103481">
    <property type="entry name" value="Multidrug resistance efflux transporter EmrE"/>
    <property type="match status" value="1"/>
</dbReference>
<evidence type="ECO:0000255" key="1">
    <source>
        <dbReference type="HAMAP-Rule" id="MF_00010"/>
    </source>
</evidence>
<name>Y485_METFK</name>
<organism>
    <name type="scientific">Methylobacillus flagellatus (strain ATCC 51484 / DSM 6875 / VKM B-1610 / KT)</name>
    <dbReference type="NCBI Taxonomy" id="265072"/>
    <lineage>
        <taxon>Bacteria</taxon>
        <taxon>Pseudomonadati</taxon>
        <taxon>Pseudomonadota</taxon>
        <taxon>Betaproteobacteria</taxon>
        <taxon>Nitrosomonadales</taxon>
        <taxon>Methylophilaceae</taxon>
        <taxon>Methylobacillus</taxon>
    </lineage>
</organism>
<comment type="subcellular location">
    <subcellularLocation>
        <location evidence="1">Cell inner membrane</location>
        <topology evidence="1">Multi-pass membrane protein</topology>
    </subcellularLocation>
</comment>
<comment type="similarity">
    <text evidence="1">Belongs to the UPF0060 family.</text>
</comment>
<accession>Q1H432</accession>